<accession>P34733</accession>
<reference key="1">
    <citation type="journal article" date="1994" name="Yeast">
        <title>Isolation and characterization of the LEU2 gene of Hansenula polymorpha.</title>
        <authorList>
            <person name="Agaphonov M.O."/>
            <person name="Poznyakovski A.I."/>
            <person name="Bogdanova A.I."/>
            <person name="Ter-Avanesyan M.D."/>
        </authorList>
    </citation>
    <scope>NUCLEOTIDE SEQUENCE [GENOMIC DNA]</scope>
    <source>
        <strain>ATCC 34438 / CBS 4732 / DSM 70277 / JCM 3621 / NBRC 1476 / NRRL Y-5445</strain>
    </source>
</reference>
<protein>
    <recommendedName>
        <fullName>3-isopropylmalate dehydrogenase</fullName>
        <shortName>3-IPM-DH</shortName>
        <shortName>IMDH</shortName>
        <ecNumber>1.1.1.85</ecNumber>
    </recommendedName>
    <alternativeName>
        <fullName>Beta-IPM dehydrogenase</fullName>
    </alternativeName>
</protein>
<keyword id="KW-0028">Amino-acid biosynthesis</keyword>
<keyword id="KW-0100">Branched-chain amino acid biosynthesis</keyword>
<keyword id="KW-0963">Cytoplasm</keyword>
<keyword id="KW-0432">Leucine biosynthesis</keyword>
<keyword id="KW-0460">Magnesium</keyword>
<keyword id="KW-0464">Manganese</keyword>
<keyword id="KW-0479">Metal-binding</keyword>
<keyword id="KW-0520">NAD</keyword>
<keyword id="KW-0560">Oxidoreductase</keyword>
<feature type="chain" id="PRO_0000083615" description="3-isopropylmalate dehydrogenase">
    <location>
        <begin position="1"/>
        <end position="362"/>
    </location>
</feature>
<feature type="binding site" evidence="1">
    <location>
        <begin position="76"/>
        <end position="87"/>
    </location>
    <ligand>
        <name>NAD(+)</name>
        <dbReference type="ChEBI" id="CHEBI:57540"/>
    </ligand>
</feature>
<feature type="binding site" evidence="1">
    <location>
        <position position="94"/>
    </location>
    <ligand>
        <name>substrate</name>
    </ligand>
</feature>
<feature type="binding site" evidence="1">
    <location>
        <position position="104"/>
    </location>
    <ligand>
        <name>substrate</name>
    </ligand>
</feature>
<feature type="binding site" evidence="1">
    <location>
        <position position="133"/>
    </location>
    <ligand>
        <name>substrate</name>
    </ligand>
</feature>
<feature type="binding site" evidence="1">
    <location>
        <position position="222"/>
    </location>
    <ligand>
        <name>Mg(2+)</name>
        <dbReference type="ChEBI" id="CHEBI:18420"/>
    </ligand>
</feature>
<feature type="binding site" evidence="1">
    <location>
        <position position="222"/>
    </location>
    <ligand>
        <name>substrate</name>
    </ligand>
</feature>
<feature type="binding site" evidence="1">
    <location>
        <position position="247"/>
    </location>
    <ligand>
        <name>Mg(2+)</name>
        <dbReference type="ChEBI" id="CHEBI:18420"/>
    </ligand>
</feature>
<feature type="binding site" evidence="1">
    <location>
        <position position="251"/>
    </location>
    <ligand>
        <name>Mg(2+)</name>
        <dbReference type="ChEBI" id="CHEBI:18420"/>
    </ligand>
</feature>
<feature type="binding site" evidence="1">
    <location>
        <begin position="286"/>
        <end position="297"/>
    </location>
    <ligand>
        <name>NAD(+)</name>
        <dbReference type="ChEBI" id="CHEBI:57540"/>
    </ligand>
</feature>
<feature type="site" description="Important for catalysis" evidence="1">
    <location>
        <position position="140"/>
    </location>
</feature>
<feature type="site" description="Important for catalysis" evidence="1">
    <location>
        <position position="189"/>
    </location>
</feature>
<dbReference type="EC" id="1.1.1.85"/>
<dbReference type="EMBL" id="U00889">
    <property type="protein sequence ID" value="AAA19109.1"/>
    <property type="molecule type" value="Unassigned_DNA"/>
</dbReference>
<dbReference type="PIR" id="S43454">
    <property type="entry name" value="S43454"/>
</dbReference>
<dbReference type="SMR" id="P34733"/>
<dbReference type="BRENDA" id="1.1.1.85">
    <property type="organism ID" value="2587"/>
</dbReference>
<dbReference type="UniPathway" id="UPA00048">
    <property type="reaction ID" value="UER00072"/>
</dbReference>
<dbReference type="GO" id="GO:0005829">
    <property type="term" value="C:cytosol"/>
    <property type="evidence" value="ECO:0007669"/>
    <property type="project" value="TreeGrafter"/>
</dbReference>
<dbReference type="GO" id="GO:0003862">
    <property type="term" value="F:3-isopropylmalate dehydrogenase activity"/>
    <property type="evidence" value="ECO:0007669"/>
    <property type="project" value="UniProtKB-EC"/>
</dbReference>
<dbReference type="GO" id="GO:0000287">
    <property type="term" value="F:magnesium ion binding"/>
    <property type="evidence" value="ECO:0007669"/>
    <property type="project" value="InterPro"/>
</dbReference>
<dbReference type="GO" id="GO:0051287">
    <property type="term" value="F:NAD binding"/>
    <property type="evidence" value="ECO:0007669"/>
    <property type="project" value="InterPro"/>
</dbReference>
<dbReference type="GO" id="GO:0009098">
    <property type="term" value="P:L-leucine biosynthetic process"/>
    <property type="evidence" value="ECO:0007669"/>
    <property type="project" value="UniProtKB-UniPathway"/>
</dbReference>
<dbReference type="FunFam" id="3.40.718.10:FF:000006">
    <property type="entry name" value="3-isopropylmalate dehydrogenase"/>
    <property type="match status" value="1"/>
</dbReference>
<dbReference type="Gene3D" id="3.40.718.10">
    <property type="entry name" value="Isopropylmalate Dehydrogenase"/>
    <property type="match status" value="1"/>
</dbReference>
<dbReference type="InterPro" id="IPR019818">
    <property type="entry name" value="IsoCit/isopropylmalate_DH_CS"/>
</dbReference>
<dbReference type="InterPro" id="IPR024084">
    <property type="entry name" value="IsoPropMal-DH-like_dom"/>
</dbReference>
<dbReference type="InterPro" id="IPR004429">
    <property type="entry name" value="Isopropylmalate_DH"/>
</dbReference>
<dbReference type="NCBIfam" id="TIGR00169">
    <property type="entry name" value="leuB"/>
    <property type="match status" value="1"/>
</dbReference>
<dbReference type="PANTHER" id="PTHR42979">
    <property type="entry name" value="3-ISOPROPYLMALATE DEHYDROGENASE"/>
    <property type="match status" value="1"/>
</dbReference>
<dbReference type="PANTHER" id="PTHR42979:SF1">
    <property type="entry name" value="3-ISOPROPYLMALATE DEHYDROGENASE"/>
    <property type="match status" value="1"/>
</dbReference>
<dbReference type="Pfam" id="PF00180">
    <property type="entry name" value="Iso_dh"/>
    <property type="match status" value="1"/>
</dbReference>
<dbReference type="SMART" id="SM01329">
    <property type="entry name" value="Iso_dh"/>
    <property type="match status" value="1"/>
</dbReference>
<dbReference type="SUPFAM" id="SSF53659">
    <property type="entry name" value="Isocitrate/Isopropylmalate dehydrogenase-like"/>
    <property type="match status" value="1"/>
</dbReference>
<dbReference type="PROSITE" id="PS00470">
    <property type="entry name" value="IDH_IMDH"/>
    <property type="match status" value="1"/>
</dbReference>
<sequence length="362" mass="38047">MSKNIVLLPGDHVGPEVVAEAVKVLEAVSSAIGVKFNFSKHLIGGASIDAYGVPLSDEALEAAKKADAVLLGAVGGPKWGTGSVRPEQGLLKIRKELNLYANLRPCSFASDALLKLSPLKSEIVKGTDFVVVRELVGGIYFGDRKEDAGDGVASDTESYSVPEVQRITRMAAFLALQSDPPLPLWSLDKANVLASSRLWRKTVEETIKNEFPQLTVQHQLIDSAAMILVKSPTKLNGVIVTNNMFGDIISDEASVIPGSLGLLPSASLASLPDTNKAFGLYEPCHGSAPDLGPGKVNPLATILSAAMMLKLSLDLVDAGRAIEQAVKNVLDAGIMTADLGGSSSTQEVGDAVAQEVAKLLKN</sequence>
<evidence type="ECO:0000250" key="1"/>
<evidence type="ECO:0000305" key="2"/>
<name>LEU3_PICAN</name>
<gene>
    <name type="primary">LEU2</name>
</gene>
<organism>
    <name type="scientific">Pichia angusta</name>
    <name type="common">Yeast</name>
    <name type="synonym">Hansenula polymorpha</name>
    <dbReference type="NCBI Taxonomy" id="870730"/>
    <lineage>
        <taxon>Eukaryota</taxon>
        <taxon>Fungi</taxon>
        <taxon>Dikarya</taxon>
        <taxon>Ascomycota</taxon>
        <taxon>Saccharomycotina</taxon>
        <taxon>Pichiomycetes</taxon>
        <taxon>Pichiales</taxon>
        <taxon>Pichiaceae</taxon>
        <taxon>Ogataea</taxon>
    </lineage>
</organism>
<proteinExistence type="inferred from homology"/>
<comment type="function">
    <text>Catalyzes the oxidation of 3-carboxy-2-hydroxy-4-methylpentanoate (3-isopropylmalate) to 3-carboxy-4-methyl-2-oxopentanoate. The product decarboxylates to 4-methyl-2 oxopentanoate.</text>
</comment>
<comment type="catalytic activity">
    <reaction>
        <text>(2R,3S)-3-isopropylmalate + NAD(+) = 4-methyl-2-oxopentanoate + CO2 + NADH</text>
        <dbReference type="Rhea" id="RHEA:32271"/>
        <dbReference type="ChEBI" id="CHEBI:16526"/>
        <dbReference type="ChEBI" id="CHEBI:17865"/>
        <dbReference type="ChEBI" id="CHEBI:35121"/>
        <dbReference type="ChEBI" id="CHEBI:57540"/>
        <dbReference type="ChEBI" id="CHEBI:57945"/>
        <dbReference type="EC" id="1.1.1.85"/>
    </reaction>
</comment>
<comment type="cofactor">
    <cofactor evidence="1">
        <name>Mg(2+)</name>
        <dbReference type="ChEBI" id="CHEBI:18420"/>
    </cofactor>
    <cofactor evidence="1">
        <name>Mn(2+)</name>
        <dbReference type="ChEBI" id="CHEBI:29035"/>
    </cofactor>
    <text evidence="1">Binds 1 Mg(2+) or Mn(2+) ion per subunit.</text>
</comment>
<comment type="pathway">
    <text>Amino-acid biosynthesis; L-leucine biosynthesis; L-leucine from 3-methyl-2-oxobutanoate: step 3/4.</text>
</comment>
<comment type="subunit">
    <text evidence="1">Homodimer.</text>
</comment>
<comment type="subcellular location">
    <subcellularLocation>
        <location>Cytoplasm</location>
    </subcellularLocation>
</comment>
<comment type="similarity">
    <text evidence="2">Belongs to the isocitrate and isopropylmalate dehydrogenases family.</text>
</comment>